<evidence type="ECO:0000255" key="1"/>
<evidence type="ECO:0000256" key="2">
    <source>
        <dbReference type="SAM" id="MobiDB-lite"/>
    </source>
</evidence>
<evidence type="ECO:0000269" key="3">
    <source>
    </source>
</evidence>
<evidence type="ECO:0000269" key="4">
    <source>
    </source>
</evidence>
<evidence type="ECO:0000269" key="5">
    <source>
    </source>
</evidence>
<evidence type="ECO:0000305" key="6"/>
<evidence type="ECO:0007744" key="7">
    <source>
    </source>
</evidence>
<evidence type="ECO:0007744" key="8">
    <source>
    </source>
</evidence>
<reference key="1">
    <citation type="journal article" date="1997" name="Nature">
        <title>The nucleotide sequence of Saccharomyces cerevisiae chromosome XIV and its evolutionary implications.</title>
        <authorList>
            <person name="Philippsen P."/>
            <person name="Kleine K."/>
            <person name="Poehlmann R."/>
            <person name="Duesterhoeft A."/>
            <person name="Hamberg K."/>
            <person name="Hegemann J.H."/>
            <person name="Obermaier B."/>
            <person name="Urrestarazu L.A."/>
            <person name="Aert R."/>
            <person name="Albermann K."/>
            <person name="Altmann R."/>
            <person name="Andre B."/>
            <person name="Baladron V."/>
            <person name="Ballesta J.P.G."/>
            <person name="Becam A.-M."/>
            <person name="Beinhauer J.D."/>
            <person name="Boskovic J."/>
            <person name="Buitrago M.J."/>
            <person name="Bussereau F."/>
            <person name="Coster F."/>
            <person name="Crouzet M."/>
            <person name="D'Angelo M."/>
            <person name="Dal Pero F."/>
            <person name="De Antoni A."/>
            <person name="del Rey F."/>
            <person name="Doignon F."/>
            <person name="Domdey H."/>
            <person name="Dubois E."/>
            <person name="Fiedler T.A."/>
            <person name="Fleig U."/>
            <person name="Floeth M."/>
            <person name="Fritz C."/>
            <person name="Gaillardin C."/>
            <person name="Garcia-Cantalejo J.M."/>
            <person name="Glansdorff N."/>
            <person name="Goffeau A."/>
            <person name="Gueldener U."/>
            <person name="Herbert C.J."/>
            <person name="Heumann K."/>
            <person name="Heuss-Neitzel D."/>
            <person name="Hilbert H."/>
            <person name="Hinni K."/>
            <person name="Iraqui Houssaini I."/>
            <person name="Jacquet M."/>
            <person name="Jimenez A."/>
            <person name="Jonniaux J.-L."/>
            <person name="Karpfinger-Hartl L."/>
            <person name="Lanfranchi G."/>
            <person name="Lepingle A."/>
            <person name="Levesque H."/>
            <person name="Lyck R."/>
            <person name="Maftahi M."/>
            <person name="Mallet L."/>
            <person name="Maurer C.T.C."/>
            <person name="Messenguy F."/>
            <person name="Mewes H.-W."/>
            <person name="Moestl D."/>
            <person name="Nasr F."/>
            <person name="Nicaud J.-M."/>
            <person name="Niedenthal R.K."/>
            <person name="Pandolfo D."/>
            <person name="Pierard A."/>
            <person name="Piravandi E."/>
            <person name="Planta R.J."/>
            <person name="Pohl T.M."/>
            <person name="Purnelle B."/>
            <person name="Rebischung C."/>
            <person name="Remacha M.A."/>
            <person name="Revuelta J.L."/>
            <person name="Rinke M."/>
            <person name="Saiz J.E."/>
            <person name="Sartorello F."/>
            <person name="Scherens B."/>
            <person name="Sen-Gupta M."/>
            <person name="Soler-Mira A."/>
            <person name="Urbanus J.H.M."/>
            <person name="Valle G."/>
            <person name="Van Dyck L."/>
            <person name="Verhasselt P."/>
            <person name="Vierendeels F."/>
            <person name="Vissers S."/>
            <person name="Voet M."/>
            <person name="Volckaert G."/>
            <person name="Wach A."/>
            <person name="Wambutt R."/>
            <person name="Wedler H."/>
            <person name="Zollner A."/>
            <person name="Hani J."/>
        </authorList>
    </citation>
    <scope>NUCLEOTIDE SEQUENCE [LARGE SCALE GENOMIC DNA]</scope>
    <source>
        <strain>ATCC 204508 / S288c</strain>
    </source>
</reference>
<reference key="2">
    <citation type="journal article" date="2014" name="G3 (Bethesda)">
        <title>The reference genome sequence of Saccharomyces cerevisiae: Then and now.</title>
        <authorList>
            <person name="Engel S.R."/>
            <person name="Dietrich F.S."/>
            <person name="Fisk D.G."/>
            <person name="Binkley G."/>
            <person name="Balakrishnan R."/>
            <person name="Costanzo M.C."/>
            <person name="Dwight S.S."/>
            <person name="Hitz B.C."/>
            <person name="Karra K."/>
            <person name="Nash R.S."/>
            <person name="Weng S."/>
            <person name="Wong E.D."/>
            <person name="Lloyd P."/>
            <person name="Skrzypek M.S."/>
            <person name="Miyasato S.R."/>
            <person name="Simison M."/>
            <person name="Cherry J.M."/>
        </authorList>
    </citation>
    <scope>GENOME REANNOTATION</scope>
    <scope>SEQUENCE REVISION TO 251</scope>
    <source>
        <strain>ATCC 204508 / S288c</strain>
    </source>
</reference>
<reference key="3">
    <citation type="journal article" date="2003" name="Nature">
        <title>Global analysis of protein localization in budding yeast.</title>
        <authorList>
            <person name="Huh W.-K."/>
            <person name="Falvo J.V."/>
            <person name="Gerke L.C."/>
            <person name="Carroll A.S."/>
            <person name="Howson R.W."/>
            <person name="Weissman J.S."/>
            <person name="O'Shea E.K."/>
        </authorList>
    </citation>
    <scope>SUBCELLULAR LOCATION [LARGE SCALE ANALYSIS]</scope>
</reference>
<reference key="4">
    <citation type="journal article" date="2005" name="Yeast">
        <title>New weakly expressed cell cycle-regulated genes in yeast.</title>
        <authorList>
            <person name="de Lichtenberg U."/>
            <person name="Wernersson R."/>
            <person name="Jensen T.S."/>
            <person name="Nielsen H.B."/>
            <person name="Fausboell A."/>
            <person name="Schmidt P."/>
            <person name="Hansen F.B."/>
            <person name="Knudsen S."/>
            <person name="Brunak S."/>
        </authorList>
    </citation>
    <scope>INDUCTION</scope>
</reference>
<reference key="5">
    <citation type="journal article" date="2008" name="Mol. Cell. Proteomics">
        <title>A multidimensional chromatography technology for in-depth phosphoproteome analysis.</title>
        <authorList>
            <person name="Albuquerque C.P."/>
            <person name="Smolka M.B."/>
            <person name="Payne S.H."/>
            <person name="Bafna V."/>
            <person name="Eng J."/>
            <person name="Zhou H."/>
        </authorList>
    </citation>
    <scope>PHOSPHORYLATION [LARGE SCALE ANALYSIS] AT SER-628</scope>
    <scope>IDENTIFICATION BY MASS SPECTROMETRY [LARGE SCALE ANALYSIS]</scope>
</reference>
<reference key="6">
    <citation type="journal article" date="2009" name="Science">
        <title>Global analysis of Cdk1 substrate phosphorylation sites provides insights into evolution.</title>
        <authorList>
            <person name="Holt L.J."/>
            <person name="Tuch B.B."/>
            <person name="Villen J."/>
            <person name="Johnson A.D."/>
            <person name="Gygi S.P."/>
            <person name="Morgan D.O."/>
        </authorList>
    </citation>
    <scope>IDENTIFICATION BY MASS SPECTROMETRY [LARGE SCALE ANALYSIS]</scope>
</reference>
<reference key="7">
    <citation type="journal article" date="2011" name="Genome Res.">
        <title>Selective ploidy ablation, a high-throughput plasmid transfer protocol, identifies new genes affecting topoisomerase I-induced DNA damage.</title>
        <authorList>
            <person name="Reid R.J."/>
            <person name="Gonzalez-Barrera S."/>
            <person name="Sunjevaric I."/>
            <person name="Alvaro D."/>
            <person name="Ciccone S."/>
            <person name="Wagner M."/>
            <person name="Rothstein R."/>
        </authorList>
    </citation>
    <scope>DISRUPTION PHENOTYPE</scope>
</reference>
<reference key="8">
    <citation type="journal article" date="2012" name="Proteomics">
        <title>Sites of ubiquitin attachment in Saccharomyces cerevisiae.</title>
        <authorList>
            <person name="Starita L.M."/>
            <person name="Lo R.S."/>
            <person name="Eng J.K."/>
            <person name="von Haller P.D."/>
            <person name="Fields S."/>
        </authorList>
    </citation>
    <scope>UBIQUITINATION [LARGE SCALE ANALYSIS] AT LYS-512</scope>
    <scope>IDENTIFICATION BY MASS SPECTROMETRY [LARGE SCALE ANALYSIS]</scope>
</reference>
<sequence length="636" mass="67401">MNSNSTIGRTTLGESDTISLSFSEPSSSLNSRSTDVVFASTSTLVPQQGSLTSLPPVSSTATPTYYSTSLTYDETLHTSIDVSSTSTLVSSTDSSSSSEQDTYSSQYDPATSSYSIITPSMSIFSSTSPMSSSSSITSEWSSLTSTTPTLSSSATSLSSSWSSLSSPSSLLVSSSLSLSLSSSYSDTKLFSFDSRSSIFSPSTPTVISPSYTYLSSISATSFQISTTSELSSSWFSTISSPSTISNKDTTFPSSSRNTSTSFYSSSLSSTNDFSTISKSSKLSPSASSSTVSISTISVPTSSSVSSSSSKVPSNRPSSSSSSDDTTSAYSSTYTFQSLQSTTSSSIPPTTQTPSTSTISTSPIPTSSQVFNTVAISSSEDSKTIYYFYTQTYDITDSSTTFVTGLPTTIAVAKSEVTSFSAPSSTITADMSFYQHWLDGSLDNNKNQGTSKTNTGTIVGSVVGSVGGILICVLVVWFMLVRKRKAKRHFKENDSFCHEIGRRTGFPTTAQAKEASLQAQDSGSQQRNTETASANNPFSNEFNFKARGNPPPVPPPRNVTAMNGSFQNMRSNFMDQENRFSYGSSFTYSSLGSSTQGGFSTLSSNSIRLGRGLDNDISHDERNTVQNNSQGFLREII</sequence>
<accession>P53882</accession>
<accession>D6W109</accession>
<gene>
    <name type="primary">TDA7</name>
    <name type="ordered locus">YNL176C</name>
    <name type="ORF">N1661</name>
</gene>
<comment type="subcellular location">
    <subcellularLocation>
        <location evidence="3">Vacuole membrane</location>
        <topology evidence="3">Single-pass membrane protein</topology>
    </subcellularLocation>
</comment>
<comment type="induction">
    <text evidence="4">During G2 phase of cell cycle. Promoter is bound by the FKH2 transcription factor.</text>
</comment>
<comment type="disruption phenotype">
    <text evidence="5">Leads to cell death when overexpressing the camptothecin mimetic TOP1-T(722)A mutant.</text>
</comment>
<comment type="similarity">
    <text evidence="6">Belongs to the TDA7 family.</text>
</comment>
<dbReference type="EMBL" id="Z71452">
    <property type="protein sequence ID" value="CAA96068.1"/>
    <property type="molecule type" value="Genomic_DNA"/>
</dbReference>
<dbReference type="EMBL" id="BK006947">
    <property type="protein sequence ID" value="DAA10375.2"/>
    <property type="molecule type" value="Genomic_DNA"/>
</dbReference>
<dbReference type="PIR" id="S63131">
    <property type="entry name" value="S63131"/>
</dbReference>
<dbReference type="RefSeq" id="NP_014223.2">
    <property type="nucleotide sequence ID" value="NM_001183014.2"/>
</dbReference>
<dbReference type="SMR" id="P53882"/>
<dbReference type="BioGRID" id="35655">
    <property type="interactions" value="13"/>
</dbReference>
<dbReference type="DIP" id="DIP-4330N"/>
<dbReference type="FunCoup" id="P53882">
    <property type="interactions" value="51"/>
</dbReference>
<dbReference type="IntAct" id="P53882">
    <property type="interactions" value="4"/>
</dbReference>
<dbReference type="MINT" id="P53882"/>
<dbReference type="STRING" id="4932.YNL176C"/>
<dbReference type="GlyCosmos" id="P53882">
    <property type="glycosylation" value="6 sites, No reported glycans"/>
</dbReference>
<dbReference type="GlyGen" id="P53882">
    <property type="glycosylation" value="6 sites"/>
</dbReference>
<dbReference type="iPTMnet" id="P53882"/>
<dbReference type="PaxDb" id="4932-YNL176C"/>
<dbReference type="PeptideAtlas" id="P53882"/>
<dbReference type="EnsemblFungi" id="YNL176C_mRNA">
    <property type="protein sequence ID" value="YNL176C"/>
    <property type="gene ID" value="YNL176C"/>
</dbReference>
<dbReference type="GeneID" id="855545"/>
<dbReference type="KEGG" id="sce:YNL176C"/>
<dbReference type="AGR" id="SGD:S000005120"/>
<dbReference type="SGD" id="S000005120">
    <property type="gene designation" value="TDA7"/>
</dbReference>
<dbReference type="VEuPathDB" id="FungiDB:YNL176C"/>
<dbReference type="eggNOG" id="ENOG502S5S1">
    <property type="taxonomic scope" value="Eukaryota"/>
</dbReference>
<dbReference type="HOGENOM" id="CLU_029057_0_0_1"/>
<dbReference type="InParanoid" id="P53882"/>
<dbReference type="OMA" id="FYQHWLD"/>
<dbReference type="OrthoDB" id="4036548at2759"/>
<dbReference type="BioCyc" id="YEAST:G3O-33188-MONOMER"/>
<dbReference type="BioGRID-ORCS" id="855545">
    <property type="hits" value="1 hit in 10 CRISPR screens"/>
</dbReference>
<dbReference type="PRO" id="PR:P53882"/>
<dbReference type="Proteomes" id="UP000002311">
    <property type="component" value="Chromosome XIV"/>
</dbReference>
<dbReference type="RNAct" id="P53882">
    <property type="molecule type" value="protein"/>
</dbReference>
<dbReference type="GO" id="GO:0000324">
    <property type="term" value="C:fungal-type vacuole"/>
    <property type="evidence" value="ECO:0000314"/>
    <property type="project" value="SGD"/>
</dbReference>
<dbReference type="GO" id="GO:0005774">
    <property type="term" value="C:vacuolar membrane"/>
    <property type="evidence" value="ECO:0007669"/>
    <property type="project" value="UniProtKB-SubCell"/>
</dbReference>
<protein>
    <recommendedName>
        <fullName>Topoisomerase I damage affected protein 7</fullName>
    </recommendedName>
</protein>
<keyword id="KW-0325">Glycoprotein</keyword>
<keyword id="KW-1017">Isopeptide bond</keyword>
<keyword id="KW-0472">Membrane</keyword>
<keyword id="KW-0597">Phosphoprotein</keyword>
<keyword id="KW-1185">Reference proteome</keyword>
<keyword id="KW-0812">Transmembrane</keyword>
<keyword id="KW-1133">Transmembrane helix</keyword>
<keyword id="KW-0832">Ubl conjugation</keyword>
<keyword id="KW-0926">Vacuole</keyword>
<organism>
    <name type="scientific">Saccharomyces cerevisiae (strain ATCC 204508 / S288c)</name>
    <name type="common">Baker's yeast</name>
    <dbReference type="NCBI Taxonomy" id="559292"/>
    <lineage>
        <taxon>Eukaryota</taxon>
        <taxon>Fungi</taxon>
        <taxon>Dikarya</taxon>
        <taxon>Ascomycota</taxon>
        <taxon>Saccharomycotina</taxon>
        <taxon>Saccharomycetes</taxon>
        <taxon>Saccharomycetales</taxon>
        <taxon>Saccharomycetaceae</taxon>
        <taxon>Saccharomyces</taxon>
    </lineage>
</organism>
<proteinExistence type="evidence at protein level"/>
<feature type="chain" id="PRO_0000203407" description="Topoisomerase I damage affected protein 7">
    <location>
        <begin position="1"/>
        <end position="636"/>
    </location>
</feature>
<feature type="transmembrane region" description="Helical" evidence="1">
    <location>
        <begin position="457"/>
        <end position="477"/>
    </location>
</feature>
<feature type="region of interest" description="Disordered" evidence="2">
    <location>
        <begin position="1"/>
        <end position="33"/>
    </location>
</feature>
<feature type="region of interest" description="Disordered" evidence="2">
    <location>
        <begin position="87"/>
        <end position="109"/>
    </location>
</feature>
<feature type="region of interest" description="Disordered" evidence="2">
    <location>
        <begin position="246"/>
        <end position="271"/>
    </location>
</feature>
<feature type="region of interest" description="Disordered" evidence="2">
    <location>
        <begin position="299"/>
        <end position="326"/>
    </location>
</feature>
<feature type="region of interest" description="Disordered" evidence="2">
    <location>
        <begin position="339"/>
        <end position="362"/>
    </location>
</feature>
<feature type="region of interest" description="Disordered" evidence="2">
    <location>
        <begin position="510"/>
        <end position="551"/>
    </location>
</feature>
<feature type="compositionally biased region" description="Polar residues" evidence="2">
    <location>
        <begin position="1"/>
        <end position="18"/>
    </location>
</feature>
<feature type="compositionally biased region" description="Low complexity" evidence="2">
    <location>
        <begin position="19"/>
        <end position="33"/>
    </location>
</feature>
<feature type="compositionally biased region" description="Low complexity" evidence="2">
    <location>
        <begin position="87"/>
        <end position="108"/>
    </location>
</feature>
<feature type="compositionally biased region" description="Polar residues" evidence="2">
    <location>
        <begin position="510"/>
        <end position="541"/>
    </location>
</feature>
<feature type="modified residue" description="Phosphoserine" evidence="7">
    <location>
        <position position="628"/>
    </location>
</feature>
<feature type="glycosylation site" description="N-linked (GlcNAc...) asparagine" evidence="1">
    <location>
        <position position="4"/>
    </location>
</feature>
<feature type="glycosylation site" description="N-linked (GlcNAc...) asparagine" evidence="1">
    <location>
        <position position="257"/>
    </location>
</feature>
<feature type="glycosylation site" description="N-linked (GlcNAc...) asparagine" evidence="1">
    <location>
        <position position="492"/>
    </location>
</feature>
<feature type="glycosylation site" description="N-linked (GlcNAc...) asparagine" evidence="1">
    <location>
        <position position="557"/>
    </location>
</feature>
<feature type="glycosylation site" description="N-linked (GlcNAc...) asparagine" evidence="1">
    <location>
        <position position="562"/>
    </location>
</feature>
<feature type="glycosylation site" description="N-linked (GlcNAc...) asparagine" evidence="1">
    <location>
        <position position="626"/>
    </location>
</feature>
<feature type="cross-link" description="Glycyl lysine isopeptide (Lys-Gly) (interchain with G-Cter in ubiquitin)" evidence="8">
    <location>
        <position position="512"/>
    </location>
</feature>
<feature type="sequence conflict" description="In Ref. 1; CAA96068." evidence="6" ref="1">
    <original>F</original>
    <variation>C</variation>
    <location>
        <position position="251"/>
    </location>
</feature>
<name>TDA7_YEAST</name>